<evidence type="ECO:0000250" key="1"/>
<evidence type="ECO:0000256" key="2">
    <source>
        <dbReference type="SAM" id="MobiDB-lite"/>
    </source>
</evidence>
<evidence type="ECO:0000305" key="3"/>
<organism>
    <name type="scientific">Trieres chinensis</name>
    <name type="common">Marine centric diatom</name>
    <name type="synonym">Odontella sinensis</name>
    <dbReference type="NCBI Taxonomy" id="1514140"/>
    <lineage>
        <taxon>Eukaryota</taxon>
        <taxon>Sar</taxon>
        <taxon>Stramenopiles</taxon>
        <taxon>Ochrophyta</taxon>
        <taxon>Bacillariophyta</taxon>
        <taxon>Mediophyceae</taxon>
        <taxon>Biddulphiophycidae</taxon>
        <taxon>Eupodiscales</taxon>
        <taxon>Parodontellaceae</taxon>
        <taxon>Trieres</taxon>
    </lineage>
</organism>
<keyword id="KW-0150">Chloroplast</keyword>
<keyword id="KW-0934">Plastid</keyword>
<keyword id="KW-0687">Ribonucleoprotein</keyword>
<keyword id="KW-0689">Ribosomal protein</keyword>
<keyword id="KW-0694">RNA-binding</keyword>
<keyword id="KW-0699">rRNA-binding</keyword>
<geneLocation type="chloroplast"/>
<accession>P49546</accession>
<sequence>MTVQKFITYNSVDINGKTLSDEYKLELNVLEKSGNYLIHKDILRHQSSQRQGTISTKTRSEVRGGGRKPWRQKGTGRARAGSSRSPLWKGGGVIFGPKPRKIILKLNKKERKLALQTLLYNKRNNISIIDNLETNLDLPKTKTFYSLCKNCEINLDQKILIIVGEKTIPLKLATRNIKNVELILASNLNTFSLLKAKQILMTPLAVKDIKEIYCG</sequence>
<dbReference type="EMBL" id="Z67753">
    <property type="protein sequence ID" value="CAA91648.1"/>
    <property type="molecule type" value="Genomic_DNA"/>
</dbReference>
<dbReference type="PIR" id="S78275">
    <property type="entry name" value="S78275"/>
</dbReference>
<dbReference type="RefSeq" id="NP_043616.1">
    <property type="nucleotide sequence ID" value="NC_001713.1"/>
</dbReference>
<dbReference type="SMR" id="P49546"/>
<dbReference type="GeneID" id="801824"/>
<dbReference type="GO" id="GO:0009507">
    <property type="term" value="C:chloroplast"/>
    <property type="evidence" value="ECO:0007669"/>
    <property type="project" value="UniProtKB-SubCell"/>
</dbReference>
<dbReference type="GO" id="GO:1990904">
    <property type="term" value="C:ribonucleoprotein complex"/>
    <property type="evidence" value="ECO:0007669"/>
    <property type="project" value="UniProtKB-KW"/>
</dbReference>
<dbReference type="GO" id="GO:0005840">
    <property type="term" value="C:ribosome"/>
    <property type="evidence" value="ECO:0007669"/>
    <property type="project" value="UniProtKB-KW"/>
</dbReference>
<dbReference type="GO" id="GO:0019843">
    <property type="term" value="F:rRNA binding"/>
    <property type="evidence" value="ECO:0007669"/>
    <property type="project" value="UniProtKB-UniRule"/>
</dbReference>
<dbReference type="GO" id="GO:0003735">
    <property type="term" value="F:structural constituent of ribosome"/>
    <property type="evidence" value="ECO:0007669"/>
    <property type="project" value="InterPro"/>
</dbReference>
<dbReference type="GO" id="GO:0006412">
    <property type="term" value="P:translation"/>
    <property type="evidence" value="ECO:0007669"/>
    <property type="project" value="UniProtKB-UniRule"/>
</dbReference>
<dbReference type="Gene3D" id="3.40.1370.10">
    <property type="match status" value="1"/>
</dbReference>
<dbReference type="HAMAP" id="MF_01328_B">
    <property type="entry name" value="Ribosomal_uL4_B"/>
    <property type="match status" value="1"/>
</dbReference>
<dbReference type="InterPro" id="IPR002136">
    <property type="entry name" value="Ribosomal_uL4"/>
</dbReference>
<dbReference type="InterPro" id="IPR013005">
    <property type="entry name" value="Ribosomal_uL4-like"/>
</dbReference>
<dbReference type="InterPro" id="IPR023574">
    <property type="entry name" value="Ribosomal_uL4_dom_sf"/>
</dbReference>
<dbReference type="NCBIfam" id="TIGR03953">
    <property type="entry name" value="rplD_bact"/>
    <property type="match status" value="1"/>
</dbReference>
<dbReference type="PANTHER" id="PTHR10746">
    <property type="entry name" value="50S RIBOSOMAL PROTEIN L4"/>
    <property type="match status" value="1"/>
</dbReference>
<dbReference type="PANTHER" id="PTHR10746:SF17">
    <property type="entry name" value="LARGE RIBOSOMAL SUBUNIT PROTEIN UL4C"/>
    <property type="match status" value="1"/>
</dbReference>
<dbReference type="Pfam" id="PF00573">
    <property type="entry name" value="Ribosomal_L4"/>
    <property type="match status" value="1"/>
</dbReference>
<dbReference type="SUPFAM" id="SSF52166">
    <property type="entry name" value="Ribosomal protein L4"/>
    <property type="match status" value="1"/>
</dbReference>
<proteinExistence type="inferred from homology"/>
<name>RK4_TRICV</name>
<feature type="chain" id="PRO_0000129325" description="Large ribosomal subunit protein uL4c">
    <location>
        <begin position="1"/>
        <end position="215"/>
    </location>
</feature>
<feature type="region of interest" description="Disordered" evidence="2">
    <location>
        <begin position="48"/>
        <end position="85"/>
    </location>
</feature>
<feature type="compositionally biased region" description="Polar residues" evidence="2">
    <location>
        <begin position="48"/>
        <end position="57"/>
    </location>
</feature>
<feature type="compositionally biased region" description="Basic residues" evidence="2">
    <location>
        <begin position="65"/>
        <end position="76"/>
    </location>
</feature>
<reference key="1">
    <citation type="journal article" date="1995" name="Plant Mol. Biol. Rep.">
        <title>The chloroplast genome of a chlorophyll a+c-containing alga, Odontella sinensis.</title>
        <authorList>
            <person name="Kowallik K.V."/>
            <person name="Stoebe B."/>
            <person name="Schaffran I."/>
            <person name="Kroth-Pancic P."/>
            <person name="Freier U."/>
        </authorList>
    </citation>
    <scope>NUCLEOTIDE SEQUENCE [LARGE SCALE GENOMIC DNA]</scope>
</reference>
<comment type="function">
    <text evidence="1">Probably binds the 23S rRNA.</text>
</comment>
<comment type="subunit">
    <text>Part of the 50S ribosomal subunit.</text>
</comment>
<comment type="subcellular location">
    <subcellularLocation>
        <location>Plastid</location>
        <location>Chloroplast</location>
    </subcellularLocation>
</comment>
<comment type="similarity">
    <text evidence="3">Belongs to the universal ribosomal protein uL4 family.</text>
</comment>
<gene>
    <name type="primary">rpl4</name>
</gene>
<protein>
    <recommendedName>
        <fullName evidence="3">Large ribosomal subunit protein uL4c</fullName>
    </recommendedName>
    <alternativeName>
        <fullName>50S ribosomal protein L4, chloroplastic</fullName>
    </alternativeName>
</protein>